<accession>A1UL23</accession>
<evidence type="ECO:0000255" key="1">
    <source>
        <dbReference type="HAMAP-Rule" id="MF_00083"/>
    </source>
</evidence>
<comment type="function">
    <text evidence="1">Hydrolyzes ribosome-free peptidyl-tRNAs (with 1 or more amino acids incorporated), which drop off the ribosome during protein synthesis, or as a result of ribosome stalling.</text>
</comment>
<comment type="function">
    <text evidence="1">Catalyzes the release of premature peptidyl moieties from peptidyl-tRNA molecules trapped in stalled 50S ribosomal subunits, and thus maintains levels of free tRNAs and 50S ribosomes.</text>
</comment>
<comment type="catalytic activity">
    <reaction evidence="1">
        <text>an N-acyl-L-alpha-aminoacyl-tRNA + H2O = an N-acyl-L-amino acid + a tRNA + H(+)</text>
        <dbReference type="Rhea" id="RHEA:54448"/>
        <dbReference type="Rhea" id="RHEA-COMP:10123"/>
        <dbReference type="Rhea" id="RHEA-COMP:13883"/>
        <dbReference type="ChEBI" id="CHEBI:15377"/>
        <dbReference type="ChEBI" id="CHEBI:15378"/>
        <dbReference type="ChEBI" id="CHEBI:59874"/>
        <dbReference type="ChEBI" id="CHEBI:78442"/>
        <dbReference type="ChEBI" id="CHEBI:138191"/>
        <dbReference type="EC" id="3.1.1.29"/>
    </reaction>
</comment>
<comment type="subunit">
    <text evidence="1">Monomer.</text>
</comment>
<comment type="subcellular location">
    <subcellularLocation>
        <location evidence="1">Cytoplasm</location>
    </subcellularLocation>
</comment>
<comment type="similarity">
    <text evidence="1">Belongs to the PTH family.</text>
</comment>
<gene>
    <name evidence="1" type="primary">pth</name>
    <name type="ordered locus">Mkms_4340</name>
</gene>
<reference key="1">
    <citation type="submission" date="2006-12" db="EMBL/GenBank/DDBJ databases">
        <title>Complete sequence of chromosome of Mycobacterium sp. KMS.</title>
        <authorList>
            <consortium name="US DOE Joint Genome Institute"/>
            <person name="Copeland A."/>
            <person name="Lucas S."/>
            <person name="Lapidus A."/>
            <person name="Barry K."/>
            <person name="Detter J.C."/>
            <person name="Glavina del Rio T."/>
            <person name="Hammon N."/>
            <person name="Israni S."/>
            <person name="Dalin E."/>
            <person name="Tice H."/>
            <person name="Pitluck S."/>
            <person name="Kiss H."/>
            <person name="Brettin T."/>
            <person name="Bruce D."/>
            <person name="Han C."/>
            <person name="Tapia R."/>
            <person name="Gilna P."/>
            <person name="Schmutz J."/>
            <person name="Larimer F."/>
            <person name="Land M."/>
            <person name="Hauser L."/>
            <person name="Kyrpides N."/>
            <person name="Mikhailova N."/>
            <person name="Miller C.D."/>
            <person name="Richardson P."/>
        </authorList>
    </citation>
    <scope>NUCLEOTIDE SEQUENCE [LARGE SCALE GENOMIC DNA]</scope>
    <source>
        <strain>KMS</strain>
    </source>
</reference>
<name>PTH_MYCSK</name>
<proteinExistence type="inferred from homology"/>
<protein>
    <recommendedName>
        <fullName evidence="1">Peptidyl-tRNA hydrolase</fullName>
        <shortName evidence="1">Pth</shortName>
        <ecNumber evidence="1">3.1.1.29</ecNumber>
    </recommendedName>
</protein>
<keyword id="KW-0963">Cytoplasm</keyword>
<keyword id="KW-0378">Hydrolase</keyword>
<keyword id="KW-0694">RNA-binding</keyword>
<keyword id="KW-0820">tRNA-binding</keyword>
<organism>
    <name type="scientific">Mycobacterium sp. (strain KMS)</name>
    <dbReference type="NCBI Taxonomy" id="189918"/>
    <lineage>
        <taxon>Bacteria</taxon>
        <taxon>Bacillati</taxon>
        <taxon>Actinomycetota</taxon>
        <taxon>Actinomycetes</taxon>
        <taxon>Mycobacteriales</taxon>
        <taxon>Mycobacteriaceae</taxon>
        <taxon>Mycobacterium</taxon>
    </lineage>
</organism>
<feature type="chain" id="PRO_1000010615" description="Peptidyl-tRNA hydrolase">
    <location>
        <begin position="1"/>
        <end position="192"/>
    </location>
</feature>
<feature type="active site" description="Proton acceptor" evidence="1">
    <location>
        <position position="22"/>
    </location>
</feature>
<feature type="binding site" evidence="1">
    <location>
        <position position="17"/>
    </location>
    <ligand>
        <name>tRNA</name>
        <dbReference type="ChEBI" id="CHEBI:17843"/>
    </ligand>
</feature>
<feature type="binding site" evidence="1">
    <location>
        <position position="68"/>
    </location>
    <ligand>
        <name>tRNA</name>
        <dbReference type="ChEBI" id="CHEBI:17843"/>
    </ligand>
</feature>
<feature type="binding site" evidence="1">
    <location>
        <position position="70"/>
    </location>
    <ligand>
        <name>tRNA</name>
        <dbReference type="ChEBI" id="CHEBI:17843"/>
    </ligand>
</feature>
<feature type="binding site" evidence="1">
    <location>
        <position position="116"/>
    </location>
    <ligand>
        <name>tRNA</name>
        <dbReference type="ChEBI" id="CHEBI:17843"/>
    </ligand>
</feature>
<feature type="site" description="Discriminates between blocked and unblocked aminoacyl-tRNA" evidence="1">
    <location>
        <position position="12"/>
    </location>
</feature>
<feature type="site" description="Stabilizes the basic form of H active site to accept a proton" evidence="1">
    <location>
        <position position="95"/>
    </location>
</feature>
<sequence length="192" mass="20256">MAEPLLVVGLGNPGPNYAKTRHNVGFVVADLLAGRIGSGFKAHRKSGADIATGRLAGRAVVLAKPRTYMNESGRNVGPLAKFYSVAPADVIVIHDELDIDFGRIRLKFGGGVAGHNGLKSVAAALGTKDFQRVRVGVGRPPGRKDAATYVLEPFTSVERPEVPTICEQAADATELLIAQGLEPAQNLVHAWA</sequence>
<dbReference type="EC" id="3.1.1.29" evidence="1"/>
<dbReference type="EMBL" id="CP000518">
    <property type="protein sequence ID" value="ABL93531.1"/>
    <property type="molecule type" value="Genomic_DNA"/>
</dbReference>
<dbReference type="SMR" id="A1UL23"/>
<dbReference type="STRING" id="189918.Mkms_4340"/>
<dbReference type="KEGG" id="mkm:Mkms_4340"/>
<dbReference type="HOGENOM" id="CLU_062456_2_2_11"/>
<dbReference type="OrthoDB" id="9800507at2"/>
<dbReference type="GO" id="GO:0005737">
    <property type="term" value="C:cytoplasm"/>
    <property type="evidence" value="ECO:0007669"/>
    <property type="project" value="UniProtKB-SubCell"/>
</dbReference>
<dbReference type="GO" id="GO:0004045">
    <property type="term" value="F:peptidyl-tRNA hydrolase activity"/>
    <property type="evidence" value="ECO:0007669"/>
    <property type="project" value="UniProtKB-UniRule"/>
</dbReference>
<dbReference type="GO" id="GO:0000049">
    <property type="term" value="F:tRNA binding"/>
    <property type="evidence" value="ECO:0007669"/>
    <property type="project" value="UniProtKB-UniRule"/>
</dbReference>
<dbReference type="GO" id="GO:0006515">
    <property type="term" value="P:protein quality control for misfolded or incompletely synthesized proteins"/>
    <property type="evidence" value="ECO:0007669"/>
    <property type="project" value="UniProtKB-UniRule"/>
</dbReference>
<dbReference type="GO" id="GO:0072344">
    <property type="term" value="P:rescue of stalled ribosome"/>
    <property type="evidence" value="ECO:0007669"/>
    <property type="project" value="UniProtKB-UniRule"/>
</dbReference>
<dbReference type="CDD" id="cd00462">
    <property type="entry name" value="PTH"/>
    <property type="match status" value="1"/>
</dbReference>
<dbReference type="FunFam" id="3.40.50.1470:FF:000001">
    <property type="entry name" value="Peptidyl-tRNA hydrolase"/>
    <property type="match status" value="1"/>
</dbReference>
<dbReference type="Gene3D" id="3.40.50.1470">
    <property type="entry name" value="Peptidyl-tRNA hydrolase"/>
    <property type="match status" value="1"/>
</dbReference>
<dbReference type="HAMAP" id="MF_00083">
    <property type="entry name" value="Pept_tRNA_hydro_bact"/>
    <property type="match status" value="1"/>
</dbReference>
<dbReference type="InterPro" id="IPR001328">
    <property type="entry name" value="Pept_tRNA_hydro"/>
</dbReference>
<dbReference type="InterPro" id="IPR018171">
    <property type="entry name" value="Pept_tRNA_hydro_CS"/>
</dbReference>
<dbReference type="InterPro" id="IPR036416">
    <property type="entry name" value="Pept_tRNA_hydro_sf"/>
</dbReference>
<dbReference type="NCBIfam" id="TIGR00447">
    <property type="entry name" value="pth"/>
    <property type="match status" value="1"/>
</dbReference>
<dbReference type="PANTHER" id="PTHR17224">
    <property type="entry name" value="PEPTIDYL-TRNA HYDROLASE"/>
    <property type="match status" value="1"/>
</dbReference>
<dbReference type="PANTHER" id="PTHR17224:SF1">
    <property type="entry name" value="PEPTIDYL-TRNA HYDROLASE"/>
    <property type="match status" value="1"/>
</dbReference>
<dbReference type="Pfam" id="PF01195">
    <property type="entry name" value="Pept_tRNA_hydro"/>
    <property type="match status" value="1"/>
</dbReference>
<dbReference type="SUPFAM" id="SSF53178">
    <property type="entry name" value="Peptidyl-tRNA hydrolase-like"/>
    <property type="match status" value="1"/>
</dbReference>
<dbReference type="PROSITE" id="PS01195">
    <property type="entry name" value="PEPT_TRNA_HYDROL_1"/>
    <property type="match status" value="1"/>
</dbReference>
<dbReference type="PROSITE" id="PS01196">
    <property type="entry name" value="PEPT_TRNA_HYDROL_2"/>
    <property type="match status" value="1"/>
</dbReference>